<sequence length="519" mass="57412">MAASCMLRSSFISPGLPQLHHQSTSKPNNGIHFFTPIKATATNDAISQQKHRRPADENIREEARRHCSSHNFSARYVPFNAGPNSDEWYSLDEIVYRSRSGGLLDVQHDMDALKKFDGQYWRSLFDSRVGKTTWPYGSGVWSKKEWVLPEIDSDDIVSAFEGNSNLFWAERFGKQFLGMTDLWVKHCGISHTGSFKDLGMTVLVSQVNRLRKMHKPVVGVGCASTGDTSAALSAYCASAGIPSIVFLPANKISMAQLVQPIANGAFVLSIDTDFDGCMQLIREVTAELPIYLANSLNSLRLEGQKTAAIEILQQFDWEVPEWVIVPGGNLGNIYAFYKGFQMCKELGLVDRIPRLVCAQAANANPLYLHYKSGWKDFKPVKANTTFASAIQIGDPVSIDRAVFALQQCNGIVEEATEEELMDAMAQADSTGMFICPHTGVALTALFKLRNSGVIAPTDRTVVVSTAHGLKFTQSKIDYHSKEIKDMECRFANPPVEVKADFGSVMDVLKSYLLSQNSKL</sequence>
<organism>
    <name type="scientific">Solanum tuberosum</name>
    <name type="common">Potato</name>
    <dbReference type="NCBI Taxonomy" id="4113"/>
    <lineage>
        <taxon>Eukaryota</taxon>
        <taxon>Viridiplantae</taxon>
        <taxon>Streptophyta</taxon>
        <taxon>Embryophyta</taxon>
        <taxon>Tracheophyta</taxon>
        <taxon>Spermatophyta</taxon>
        <taxon>Magnoliopsida</taxon>
        <taxon>eudicotyledons</taxon>
        <taxon>Gunneridae</taxon>
        <taxon>Pentapetalae</taxon>
        <taxon>asterids</taxon>
        <taxon>lamiids</taxon>
        <taxon>Solanales</taxon>
        <taxon>Solanaceae</taxon>
        <taxon>Solanoideae</taxon>
        <taxon>Solaneae</taxon>
        <taxon>Solanum</taxon>
    </lineage>
</organism>
<keyword id="KW-0021">Allosteric enzyme</keyword>
<keyword id="KW-0028">Amino-acid biosynthesis</keyword>
<keyword id="KW-0150">Chloroplast</keyword>
<keyword id="KW-0456">Lyase</keyword>
<keyword id="KW-0934">Plastid</keyword>
<keyword id="KW-0663">Pyridoxal phosphate</keyword>
<keyword id="KW-1185">Reference proteome</keyword>
<keyword id="KW-0949">S-adenosyl-L-methionine</keyword>
<keyword id="KW-0791">Threonine biosynthesis</keyword>
<keyword id="KW-0809">Transit peptide</keyword>
<dbReference type="EC" id="4.2.3.1"/>
<dbReference type="EMBL" id="AF082894">
    <property type="protein sequence ID" value="AAF74984.1"/>
    <property type="molecule type" value="mRNA"/>
</dbReference>
<dbReference type="RefSeq" id="NP_001274994.1">
    <property type="nucleotide sequence ID" value="NM_001288065.1"/>
</dbReference>
<dbReference type="SMR" id="Q9MT28"/>
<dbReference type="FunCoup" id="Q9MT28">
    <property type="interactions" value="763"/>
</dbReference>
<dbReference type="STRING" id="4113.Q9MT28"/>
<dbReference type="PaxDb" id="4113-PGSC0003DMT400006366"/>
<dbReference type="EnsemblPlants" id="RHC03H1G2400.2.1">
    <property type="protein sequence ID" value="RHC03H1G2400.2.1.cds.1"/>
    <property type="gene ID" value="RHC03H1G2400.2"/>
</dbReference>
<dbReference type="GeneID" id="102577745"/>
<dbReference type="Gramene" id="RHC03H1G2400.2.1">
    <property type="protein sequence ID" value="RHC03H1G2400.2.1.cds.1"/>
    <property type="gene ID" value="RHC03H1G2400.2"/>
</dbReference>
<dbReference type="KEGG" id="sot:102577745"/>
<dbReference type="eggNOG" id="ENOG502QSQC">
    <property type="taxonomic scope" value="Eukaryota"/>
</dbReference>
<dbReference type="InParanoid" id="Q9MT28"/>
<dbReference type="OrthoDB" id="7773036at2759"/>
<dbReference type="UniPathway" id="UPA00050">
    <property type="reaction ID" value="UER00065"/>
</dbReference>
<dbReference type="Proteomes" id="UP000011115">
    <property type="component" value="Unassembled WGS sequence"/>
</dbReference>
<dbReference type="ExpressionAtlas" id="Q9MT28">
    <property type="expression patterns" value="baseline"/>
</dbReference>
<dbReference type="GO" id="GO:0009507">
    <property type="term" value="C:chloroplast"/>
    <property type="evidence" value="ECO:0007669"/>
    <property type="project" value="UniProtKB-SubCell"/>
</dbReference>
<dbReference type="GO" id="GO:0005737">
    <property type="term" value="C:cytoplasm"/>
    <property type="evidence" value="ECO:0000318"/>
    <property type="project" value="GO_Central"/>
</dbReference>
<dbReference type="GO" id="GO:0030170">
    <property type="term" value="F:pyridoxal phosphate binding"/>
    <property type="evidence" value="ECO:0007669"/>
    <property type="project" value="InterPro"/>
</dbReference>
<dbReference type="GO" id="GO:0004795">
    <property type="term" value="F:threonine synthase activity"/>
    <property type="evidence" value="ECO:0000318"/>
    <property type="project" value="GO_Central"/>
</dbReference>
<dbReference type="GO" id="GO:0019344">
    <property type="term" value="P:cysteine biosynthetic process"/>
    <property type="evidence" value="ECO:0000318"/>
    <property type="project" value="GO_Central"/>
</dbReference>
<dbReference type="GO" id="GO:0009088">
    <property type="term" value="P:threonine biosynthetic process"/>
    <property type="evidence" value="ECO:0007669"/>
    <property type="project" value="UniProtKB-UniPathway"/>
</dbReference>
<dbReference type="CDD" id="cd01563">
    <property type="entry name" value="Thr-synth_1"/>
    <property type="match status" value="1"/>
</dbReference>
<dbReference type="FunFam" id="3.40.50.1100:FF:000030">
    <property type="entry name" value="Threonine synthase 1, chloroplastic"/>
    <property type="match status" value="1"/>
</dbReference>
<dbReference type="Gene3D" id="3.40.50.1100">
    <property type="match status" value="2"/>
</dbReference>
<dbReference type="InterPro" id="IPR050214">
    <property type="entry name" value="Cys_Synth/Cystath_Beta-Synth"/>
</dbReference>
<dbReference type="InterPro" id="IPR000634">
    <property type="entry name" value="Ser/Thr_deHydtase_PyrdxlP-BS"/>
</dbReference>
<dbReference type="InterPro" id="IPR004450">
    <property type="entry name" value="Thr_synthase-like"/>
</dbReference>
<dbReference type="InterPro" id="IPR001926">
    <property type="entry name" value="TrpB-like_PALP"/>
</dbReference>
<dbReference type="InterPro" id="IPR036052">
    <property type="entry name" value="TrpB-like_PALP_sf"/>
</dbReference>
<dbReference type="NCBIfam" id="TIGR00260">
    <property type="entry name" value="thrC"/>
    <property type="match status" value="1"/>
</dbReference>
<dbReference type="PANTHER" id="PTHR10314">
    <property type="entry name" value="CYSTATHIONINE BETA-SYNTHASE"/>
    <property type="match status" value="1"/>
</dbReference>
<dbReference type="Pfam" id="PF00291">
    <property type="entry name" value="PALP"/>
    <property type="match status" value="1"/>
</dbReference>
<dbReference type="SUPFAM" id="SSF53686">
    <property type="entry name" value="Tryptophan synthase beta subunit-like PLP-dependent enzymes"/>
    <property type="match status" value="1"/>
</dbReference>
<dbReference type="PROSITE" id="PS00165">
    <property type="entry name" value="DEHYDRATASE_SER_THR"/>
    <property type="match status" value="1"/>
</dbReference>
<feature type="transit peptide" description="Chloroplast" evidence="1">
    <location>
        <begin position="1"/>
        <end position="40"/>
    </location>
</feature>
<feature type="chain" id="PRO_0000033618" description="Threonine synthase, chloroplastic">
    <location>
        <begin position="41"/>
        <end position="519"/>
    </location>
</feature>
<feature type="binding site" evidence="1">
    <location>
        <begin position="328"/>
        <end position="332"/>
    </location>
    <ligand>
        <name>pyridoxal 5'-phosphate</name>
        <dbReference type="ChEBI" id="CHEBI:597326"/>
    </ligand>
</feature>
<feature type="binding site" evidence="1">
    <location>
        <position position="465"/>
    </location>
    <ligand>
        <name>pyridoxal 5'-phosphate</name>
        <dbReference type="ChEBI" id="CHEBI:597326"/>
    </ligand>
</feature>
<feature type="modified residue" description="N6-(pyridoxal phosphate)lysine" evidence="1">
    <location>
        <position position="196"/>
    </location>
</feature>
<accession>Q9MT28</accession>
<proteinExistence type="evidence at transcript level"/>
<protein>
    <recommendedName>
        <fullName>Threonine synthase, chloroplastic</fullName>
        <shortName>TS</shortName>
        <ecNumber>4.2.3.1</ecNumber>
    </recommendedName>
</protein>
<reference key="1">
    <citation type="journal article" date="2000" name="Plant Sci.">
        <title>Expression of threonine synthase from Solanum tuberosum L. is not metabolically regulated by photosynthesis-related signals or by nitrogenous compounds.</title>
        <authorList>
            <person name="Casazza A.P."/>
            <person name="Basner A."/>
            <person name="Hoefgen R."/>
            <person name="Hesse H."/>
        </authorList>
    </citation>
    <scope>NUCLEOTIDE SEQUENCE [MRNA]</scope>
    <source>
        <tissue>Leaf</tissue>
    </source>
</reference>
<comment type="function">
    <text evidence="1">Catalyzes the gamma-elimination of phosphate from L-phosphohomoserine and the beta-addition of water to produce L-threonine.</text>
</comment>
<comment type="catalytic activity">
    <reaction>
        <text>O-phospho-L-homoserine + H2O = L-threonine + phosphate</text>
        <dbReference type="Rhea" id="RHEA:10840"/>
        <dbReference type="ChEBI" id="CHEBI:15377"/>
        <dbReference type="ChEBI" id="CHEBI:43474"/>
        <dbReference type="ChEBI" id="CHEBI:57590"/>
        <dbReference type="ChEBI" id="CHEBI:57926"/>
        <dbReference type="EC" id="4.2.3.1"/>
    </reaction>
</comment>
<comment type="cofactor">
    <cofactor evidence="1">
        <name>pyridoxal 5'-phosphate</name>
        <dbReference type="ChEBI" id="CHEBI:597326"/>
    </cofactor>
</comment>
<comment type="activity regulation">
    <text evidence="1">Allosterically activated by S-adenosyl-methionine (SAM).</text>
</comment>
<comment type="pathway">
    <text>Amino-acid biosynthesis; L-threonine biosynthesis; L-threonine from L-aspartate: step 5/5.</text>
</comment>
<comment type="subunit">
    <text evidence="1">Homodimer.</text>
</comment>
<comment type="subcellular location">
    <subcellularLocation>
        <location evidence="1">Plastid</location>
        <location evidence="1">Chloroplast</location>
    </subcellularLocation>
</comment>
<comment type="similarity">
    <text evidence="2">Belongs to the threonine synthase family.</text>
</comment>
<name>THRC_SOLTU</name>
<evidence type="ECO:0000250" key="1"/>
<evidence type="ECO:0000305" key="2"/>